<comment type="subcellular location">
    <subcellularLocation>
        <location evidence="3">Cell membrane</location>
        <topology evidence="3">Single-pass membrane protein</topology>
    </subcellularLocation>
</comment>
<organism>
    <name type="scientific">Salmonella typhi</name>
    <dbReference type="NCBI Taxonomy" id="90370"/>
    <lineage>
        <taxon>Bacteria</taxon>
        <taxon>Pseudomonadati</taxon>
        <taxon>Pseudomonadota</taxon>
        <taxon>Gammaproteobacteria</taxon>
        <taxon>Enterobacterales</taxon>
        <taxon>Enterobacteriaceae</taxon>
        <taxon>Salmonella</taxon>
    </lineage>
</organism>
<feature type="chain" id="PRO_0000169050" description="Uncharacterized protein YebO">
    <location>
        <begin position="1"/>
        <end position="95"/>
    </location>
</feature>
<feature type="transmembrane region" description="Helical" evidence="1">
    <location>
        <begin position="12"/>
        <end position="32"/>
    </location>
</feature>
<feature type="region of interest" description="Disordered" evidence="2">
    <location>
        <begin position="66"/>
        <end position="87"/>
    </location>
</feature>
<name>YEBO_SALTI</name>
<proteinExistence type="predicted"/>
<protein>
    <recommendedName>
        <fullName>Uncharacterized protein YebO</fullName>
    </recommendedName>
</protein>
<reference key="1">
    <citation type="journal article" date="2001" name="Nature">
        <title>Complete genome sequence of a multiple drug resistant Salmonella enterica serovar Typhi CT18.</title>
        <authorList>
            <person name="Parkhill J."/>
            <person name="Dougan G."/>
            <person name="James K.D."/>
            <person name="Thomson N.R."/>
            <person name="Pickard D."/>
            <person name="Wain J."/>
            <person name="Churcher C.M."/>
            <person name="Mungall K.L."/>
            <person name="Bentley S.D."/>
            <person name="Holden M.T.G."/>
            <person name="Sebaihia M."/>
            <person name="Baker S."/>
            <person name="Basham D."/>
            <person name="Brooks K."/>
            <person name="Chillingworth T."/>
            <person name="Connerton P."/>
            <person name="Cronin A."/>
            <person name="Davis P."/>
            <person name="Davies R.M."/>
            <person name="Dowd L."/>
            <person name="White N."/>
            <person name="Farrar J."/>
            <person name="Feltwell T."/>
            <person name="Hamlin N."/>
            <person name="Haque A."/>
            <person name="Hien T.T."/>
            <person name="Holroyd S."/>
            <person name="Jagels K."/>
            <person name="Krogh A."/>
            <person name="Larsen T.S."/>
            <person name="Leather S."/>
            <person name="Moule S."/>
            <person name="O'Gaora P."/>
            <person name="Parry C."/>
            <person name="Quail M.A."/>
            <person name="Rutherford K.M."/>
            <person name="Simmonds M."/>
            <person name="Skelton J."/>
            <person name="Stevens K."/>
            <person name="Whitehead S."/>
            <person name="Barrell B.G."/>
        </authorList>
    </citation>
    <scope>NUCLEOTIDE SEQUENCE [LARGE SCALE GENOMIC DNA]</scope>
    <source>
        <strain>CT18</strain>
    </source>
</reference>
<reference key="2">
    <citation type="journal article" date="2003" name="J. Bacteriol.">
        <title>Comparative genomics of Salmonella enterica serovar Typhi strains Ty2 and CT18.</title>
        <authorList>
            <person name="Deng W."/>
            <person name="Liou S.-R."/>
            <person name="Plunkett G. III"/>
            <person name="Mayhew G.F."/>
            <person name="Rose D.J."/>
            <person name="Burland V."/>
            <person name="Kodoyianni V."/>
            <person name="Schwartz D.C."/>
            <person name="Blattner F.R."/>
        </authorList>
    </citation>
    <scope>NUCLEOTIDE SEQUENCE [LARGE SCALE GENOMIC DNA]</scope>
    <source>
        <strain>ATCC 700931 / Ty2</strain>
    </source>
</reference>
<dbReference type="EMBL" id="AL513382">
    <property type="protein sequence ID" value="CAD05521.1"/>
    <property type="molecule type" value="Genomic_DNA"/>
</dbReference>
<dbReference type="EMBL" id="AE014613">
    <property type="protein sequence ID" value="AAO68705.1"/>
    <property type="molecule type" value="Genomic_DNA"/>
</dbReference>
<dbReference type="RefSeq" id="NP_456345.1">
    <property type="nucleotide sequence ID" value="NC_003198.1"/>
</dbReference>
<dbReference type="RefSeq" id="WP_001000660.1">
    <property type="nucleotide sequence ID" value="NZ_WSUR01000004.1"/>
</dbReference>
<dbReference type="SMR" id="P64502"/>
<dbReference type="STRING" id="220341.gene:17585886"/>
<dbReference type="KEGG" id="stt:t1039"/>
<dbReference type="KEGG" id="sty:STY1969"/>
<dbReference type="PATRIC" id="fig|220341.7.peg.1986"/>
<dbReference type="eggNOG" id="ENOG5032S3N">
    <property type="taxonomic scope" value="Bacteria"/>
</dbReference>
<dbReference type="HOGENOM" id="CLU_165389_1_0_6"/>
<dbReference type="OMA" id="VLWFFVN"/>
<dbReference type="OrthoDB" id="6485757at2"/>
<dbReference type="Proteomes" id="UP000000541">
    <property type="component" value="Chromosome"/>
</dbReference>
<dbReference type="Proteomes" id="UP000002670">
    <property type="component" value="Chromosome"/>
</dbReference>
<dbReference type="GO" id="GO:0005886">
    <property type="term" value="C:plasma membrane"/>
    <property type="evidence" value="ECO:0007669"/>
    <property type="project" value="UniProtKB-SubCell"/>
</dbReference>
<dbReference type="InterPro" id="IPR025594">
    <property type="entry name" value="YebO"/>
</dbReference>
<dbReference type="Pfam" id="PF13974">
    <property type="entry name" value="YebO"/>
    <property type="match status" value="1"/>
</dbReference>
<sequence length="95" mass="10566">MNDVLNSGAFSLASLIVSMVVLVVGLALWFFVNRASSRANEQIELLEALLDQQKRQNALLRRLCEANEPEKEAEPATAASEPKEDEDIIRLVAER</sequence>
<keyword id="KW-1003">Cell membrane</keyword>
<keyword id="KW-0472">Membrane</keyword>
<keyword id="KW-0812">Transmembrane</keyword>
<keyword id="KW-1133">Transmembrane helix</keyword>
<evidence type="ECO:0000255" key="1"/>
<evidence type="ECO:0000256" key="2">
    <source>
        <dbReference type="SAM" id="MobiDB-lite"/>
    </source>
</evidence>
<evidence type="ECO:0000305" key="3"/>
<accession>P64502</accession>
<accession>Q8XF43</accession>
<gene>
    <name type="primary">yebO</name>
    <name type="ordered locus">STY1969</name>
    <name type="ordered locus">t1039</name>
</gene>